<organism>
    <name type="scientific">Arabidopsis thaliana</name>
    <name type="common">Mouse-ear cress</name>
    <dbReference type="NCBI Taxonomy" id="3702"/>
    <lineage>
        <taxon>Eukaryota</taxon>
        <taxon>Viridiplantae</taxon>
        <taxon>Streptophyta</taxon>
        <taxon>Embryophyta</taxon>
        <taxon>Tracheophyta</taxon>
        <taxon>Spermatophyta</taxon>
        <taxon>Magnoliopsida</taxon>
        <taxon>eudicotyledons</taxon>
        <taxon>Gunneridae</taxon>
        <taxon>Pentapetalae</taxon>
        <taxon>rosids</taxon>
        <taxon>malvids</taxon>
        <taxon>Brassicales</taxon>
        <taxon>Brassicaceae</taxon>
        <taxon>Camelineae</taxon>
        <taxon>Arabidopsis</taxon>
    </lineage>
</organism>
<gene>
    <name evidence="11 12 13" type="primary">AIPP3</name>
    <name evidence="9 13" type="synonym">BDT1</name>
    <name evidence="10" type="synonym">RVR1</name>
    <name evidence="15" type="ordered locus">At4g11560</name>
    <name evidence="16" type="ORF">F25E4.180</name>
</gene>
<reference key="1">
    <citation type="journal article" date="1999" name="Nature">
        <title>Sequence and analysis of chromosome 4 of the plant Arabidopsis thaliana.</title>
        <authorList>
            <person name="Mayer K.F.X."/>
            <person name="Schueller C."/>
            <person name="Wambutt R."/>
            <person name="Murphy G."/>
            <person name="Volckaert G."/>
            <person name="Pohl T."/>
            <person name="Duesterhoeft A."/>
            <person name="Stiekema W."/>
            <person name="Entian K.-D."/>
            <person name="Terryn N."/>
            <person name="Harris B."/>
            <person name="Ansorge W."/>
            <person name="Brandt P."/>
            <person name="Grivell L.A."/>
            <person name="Rieger M."/>
            <person name="Weichselgartner M."/>
            <person name="de Simone V."/>
            <person name="Obermaier B."/>
            <person name="Mache R."/>
            <person name="Mueller M."/>
            <person name="Kreis M."/>
            <person name="Delseny M."/>
            <person name="Puigdomenech P."/>
            <person name="Watson M."/>
            <person name="Schmidtheini T."/>
            <person name="Reichert B."/>
            <person name="Portetelle D."/>
            <person name="Perez-Alonso M."/>
            <person name="Boutry M."/>
            <person name="Bancroft I."/>
            <person name="Vos P."/>
            <person name="Hoheisel J."/>
            <person name="Zimmermann W."/>
            <person name="Wedler H."/>
            <person name="Ridley P."/>
            <person name="Langham S.-A."/>
            <person name="McCullagh B."/>
            <person name="Bilham L."/>
            <person name="Robben J."/>
            <person name="van der Schueren J."/>
            <person name="Grymonprez B."/>
            <person name="Chuang Y.-J."/>
            <person name="Vandenbussche F."/>
            <person name="Braeken M."/>
            <person name="Weltjens I."/>
            <person name="Voet M."/>
            <person name="Bastiaens I."/>
            <person name="Aert R."/>
            <person name="Defoor E."/>
            <person name="Weitzenegger T."/>
            <person name="Bothe G."/>
            <person name="Ramsperger U."/>
            <person name="Hilbert H."/>
            <person name="Braun M."/>
            <person name="Holzer E."/>
            <person name="Brandt A."/>
            <person name="Peters S."/>
            <person name="van Staveren M."/>
            <person name="Dirkse W."/>
            <person name="Mooijman P."/>
            <person name="Klein Lankhorst R."/>
            <person name="Rose M."/>
            <person name="Hauf J."/>
            <person name="Koetter P."/>
            <person name="Berneiser S."/>
            <person name="Hempel S."/>
            <person name="Feldpausch M."/>
            <person name="Lamberth S."/>
            <person name="Van den Daele H."/>
            <person name="De Keyser A."/>
            <person name="Buysshaert C."/>
            <person name="Gielen J."/>
            <person name="Villarroel R."/>
            <person name="De Clercq R."/>
            <person name="van Montagu M."/>
            <person name="Rogers J."/>
            <person name="Cronin A."/>
            <person name="Quail M.A."/>
            <person name="Bray-Allen S."/>
            <person name="Clark L."/>
            <person name="Doggett J."/>
            <person name="Hall S."/>
            <person name="Kay M."/>
            <person name="Lennard N."/>
            <person name="McLay K."/>
            <person name="Mayes R."/>
            <person name="Pettett A."/>
            <person name="Rajandream M.A."/>
            <person name="Lyne M."/>
            <person name="Benes V."/>
            <person name="Rechmann S."/>
            <person name="Borkova D."/>
            <person name="Bloecker H."/>
            <person name="Scharfe M."/>
            <person name="Grimm M."/>
            <person name="Loehnert T.-H."/>
            <person name="Dose S."/>
            <person name="de Haan M."/>
            <person name="Maarse A.C."/>
            <person name="Schaefer M."/>
            <person name="Mueller-Auer S."/>
            <person name="Gabel C."/>
            <person name="Fuchs M."/>
            <person name="Fartmann B."/>
            <person name="Granderath K."/>
            <person name="Dauner D."/>
            <person name="Herzl A."/>
            <person name="Neumann S."/>
            <person name="Argiriou A."/>
            <person name="Vitale D."/>
            <person name="Liguori R."/>
            <person name="Piravandi E."/>
            <person name="Massenet O."/>
            <person name="Quigley F."/>
            <person name="Clabauld G."/>
            <person name="Muendlein A."/>
            <person name="Felber R."/>
            <person name="Schnabl S."/>
            <person name="Hiller R."/>
            <person name="Schmidt W."/>
            <person name="Lecharny A."/>
            <person name="Aubourg S."/>
            <person name="Chefdor F."/>
            <person name="Cooke R."/>
            <person name="Berger C."/>
            <person name="Monfort A."/>
            <person name="Casacuberta E."/>
            <person name="Gibbons T."/>
            <person name="Weber N."/>
            <person name="Vandenbol M."/>
            <person name="Bargues M."/>
            <person name="Terol J."/>
            <person name="Torres A."/>
            <person name="Perez-Perez A."/>
            <person name="Purnelle B."/>
            <person name="Bent E."/>
            <person name="Johnson S."/>
            <person name="Tacon D."/>
            <person name="Jesse T."/>
            <person name="Heijnen L."/>
            <person name="Schwarz S."/>
            <person name="Scholler P."/>
            <person name="Heber S."/>
            <person name="Francs P."/>
            <person name="Bielke C."/>
            <person name="Frishman D."/>
            <person name="Haase D."/>
            <person name="Lemcke K."/>
            <person name="Mewes H.-W."/>
            <person name="Stocker S."/>
            <person name="Zaccaria P."/>
            <person name="Bevan M."/>
            <person name="Wilson R.K."/>
            <person name="de la Bastide M."/>
            <person name="Habermann K."/>
            <person name="Parnell L."/>
            <person name="Dedhia N."/>
            <person name="Gnoj L."/>
            <person name="Schutz K."/>
            <person name="Huang E."/>
            <person name="Spiegel L."/>
            <person name="Sekhon M."/>
            <person name="Murray J."/>
            <person name="Sheet P."/>
            <person name="Cordes M."/>
            <person name="Abu-Threideh J."/>
            <person name="Stoneking T."/>
            <person name="Kalicki J."/>
            <person name="Graves T."/>
            <person name="Harmon G."/>
            <person name="Edwards J."/>
            <person name="Latreille P."/>
            <person name="Courtney L."/>
            <person name="Cloud J."/>
            <person name="Abbott A."/>
            <person name="Scott K."/>
            <person name="Johnson D."/>
            <person name="Minx P."/>
            <person name="Bentley D."/>
            <person name="Fulton B."/>
            <person name="Miller N."/>
            <person name="Greco T."/>
            <person name="Kemp K."/>
            <person name="Kramer J."/>
            <person name="Fulton L."/>
            <person name="Mardis E."/>
            <person name="Dante M."/>
            <person name="Pepin K."/>
            <person name="Hillier L.W."/>
            <person name="Nelson J."/>
            <person name="Spieth J."/>
            <person name="Ryan E."/>
            <person name="Andrews S."/>
            <person name="Geisel C."/>
            <person name="Layman D."/>
            <person name="Du H."/>
            <person name="Ali J."/>
            <person name="Berghoff A."/>
            <person name="Jones K."/>
            <person name="Drone K."/>
            <person name="Cotton M."/>
            <person name="Joshu C."/>
            <person name="Antonoiu B."/>
            <person name="Zidanic M."/>
            <person name="Strong C."/>
            <person name="Sun H."/>
            <person name="Lamar B."/>
            <person name="Yordan C."/>
            <person name="Ma P."/>
            <person name="Zhong J."/>
            <person name="Preston R."/>
            <person name="Vil D."/>
            <person name="Shekher M."/>
            <person name="Matero A."/>
            <person name="Shah R."/>
            <person name="Swaby I.K."/>
            <person name="O'Shaughnessy A."/>
            <person name="Rodriguez M."/>
            <person name="Hoffman J."/>
            <person name="Till S."/>
            <person name="Granat S."/>
            <person name="Shohdy N."/>
            <person name="Hasegawa A."/>
            <person name="Hameed A."/>
            <person name="Lodhi M."/>
            <person name="Johnson A."/>
            <person name="Chen E."/>
            <person name="Marra M.A."/>
            <person name="Martienssen R."/>
            <person name="McCombie W.R."/>
        </authorList>
    </citation>
    <scope>NUCLEOTIDE SEQUENCE [LARGE SCALE GENOMIC DNA]</scope>
    <source>
        <strain>cv. Columbia</strain>
    </source>
</reference>
<reference key="2">
    <citation type="journal article" date="2017" name="Plant J.">
        <title>Araport11: a complete reannotation of the Arabidopsis thaliana reference genome.</title>
        <authorList>
            <person name="Cheng C.Y."/>
            <person name="Krishnakumar V."/>
            <person name="Chan A.P."/>
            <person name="Thibaud-Nissen F."/>
            <person name="Schobel S."/>
            <person name="Town C.D."/>
        </authorList>
    </citation>
    <scope>GENOME REANNOTATION</scope>
    <source>
        <strain>cv. Columbia</strain>
    </source>
</reference>
<reference key="3">
    <citation type="journal article" date="2003" name="Science">
        <title>Empirical analysis of transcriptional activity in the Arabidopsis genome.</title>
        <authorList>
            <person name="Yamada K."/>
            <person name="Lim J."/>
            <person name="Dale J.M."/>
            <person name="Chen H."/>
            <person name="Shinn P."/>
            <person name="Palm C.J."/>
            <person name="Southwick A.M."/>
            <person name="Wu H.C."/>
            <person name="Kim C.J."/>
            <person name="Nguyen M."/>
            <person name="Pham P.K."/>
            <person name="Cheuk R.F."/>
            <person name="Karlin-Newmann G."/>
            <person name="Liu S.X."/>
            <person name="Lam B."/>
            <person name="Sakano H."/>
            <person name="Wu T."/>
            <person name="Yu G."/>
            <person name="Miranda M."/>
            <person name="Quach H.L."/>
            <person name="Tripp M."/>
            <person name="Chang C.H."/>
            <person name="Lee J.M."/>
            <person name="Toriumi M.J."/>
            <person name="Chan M.M."/>
            <person name="Tang C.C."/>
            <person name="Onodera C.S."/>
            <person name="Deng J.M."/>
            <person name="Akiyama K."/>
            <person name="Ansari Y."/>
            <person name="Arakawa T."/>
            <person name="Banh J."/>
            <person name="Banno F."/>
            <person name="Bowser L."/>
            <person name="Brooks S.Y."/>
            <person name="Carninci P."/>
            <person name="Chao Q."/>
            <person name="Choy N."/>
            <person name="Enju A."/>
            <person name="Goldsmith A.D."/>
            <person name="Gurjal M."/>
            <person name="Hansen N.F."/>
            <person name="Hayashizaki Y."/>
            <person name="Johnson-Hopson C."/>
            <person name="Hsuan V.W."/>
            <person name="Iida K."/>
            <person name="Karnes M."/>
            <person name="Khan S."/>
            <person name="Koesema E."/>
            <person name="Ishida J."/>
            <person name="Jiang P.X."/>
            <person name="Jones T."/>
            <person name="Kawai J."/>
            <person name="Kamiya A."/>
            <person name="Meyers C."/>
            <person name="Nakajima M."/>
            <person name="Narusaka M."/>
            <person name="Seki M."/>
            <person name="Sakurai T."/>
            <person name="Satou M."/>
            <person name="Tamse R."/>
            <person name="Vaysberg M."/>
            <person name="Wallender E.K."/>
            <person name="Wong C."/>
            <person name="Yamamura Y."/>
            <person name="Yuan S."/>
            <person name="Shinozaki K."/>
            <person name="Davis R.W."/>
            <person name="Theologis A."/>
            <person name="Ecker J.R."/>
        </authorList>
    </citation>
    <scope>NUCLEOTIDE SEQUENCE [LARGE SCALE MRNA]</scope>
    <source>
        <strain>cv. Columbia</strain>
    </source>
</reference>
<reference key="4">
    <citation type="journal article" date="2016" name="Plant Cell">
        <title>The SUMO E3 ligase-like proteins PIAL1 and PIAL2 interact with MOM1 and form a novel complex required for transcriptional silencing.</title>
        <authorList>
            <person name="Han Y.-F."/>
            <person name="Zhao Q.-Y."/>
            <person name="Dang L.-L."/>
            <person name="Luo Y.-X."/>
            <person name="Chen S.-S."/>
            <person name="Shao C.-R."/>
            <person name="Huang H.-W."/>
            <person name="Li Y.-Q."/>
            <person name="Li L."/>
            <person name="Cai T."/>
            <person name="Chen S."/>
            <person name="He X.-J."/>
        </authorList>
    </citation>
    <scope>INTERACTION WITH MOM1</scope>
    <source>
        <strain>cv. Columbia</strain>
    </source>
</reference>
<reference key="5">
    <citation type="journal article" date="2017" name="Proc. Natl. Acad. Sci. U.S.A.">
        <title>Establishment of a vernalization requirement in Brachypodium distachyon requires REPRESSOR OF VERNALIZATION1.</title>
        <authorList>
            <person name="Woods D.P."/>
            <person name="Ream T.S."/>
            <person name="Bouche F."/>
            <person name="Lee J."/>
            <person name="Thrower N."/>
            <person name="Wilkerson C."/>
            <person name="Amasino R.M."/>
        </authorList>
    </citation>
    <scope>FUNCTION</scope>
    <scope>DISRUPTION PHENOTYPE</scope>
</reference>
<reference key="6">
    <citation type="journal article" date="2017" name="Proc. Natl. Acad. Sci. U.S.A.">
        <title>A protein complex regulates RNA processing of intronic heterochromatin-containing genes in Arabidopsis.</title>
        <authorList>
            <person name="Duan C.-G."/>
            <person name="Wang X."/>
            <person name="Zhang L."/>
            <person name="Xiong X."/>
            <person name="Zhang Z."/>
            <person name="Tang K."/>
            <person name="Pan L."/>
            <person name="Hsu C.-C."/>
            <person name="Xu H."/>
            <person name="Tao W.A."/>
            <person name="Zhang H."/>
            <person name="Zhu J.-K."/>
        </authorList>
    </citation>
    <scope>FUNCTION</scope>
    <scope>DISRUPTION PHENOTYPE</scope>
    <scope>SUBUNIT</scope>
    <scope>INTERACTION WITH AIPP2</scope>
    <source>
        <strain>cv. Columbia</strain>
    </source>
</reference>
<reference key="7">
    <citation type="journal article" date="2021" name="J. Integr. Plant Biol.">
        <title>A histone H3K27me3 reader cooperates with a family of PHD finger-containing proteins to regulate flowering time in Arabidopsis.</title>
        <authorList>
            <person name="Qian F."/>
            <person name="Zhao Q.-Y."/>
            <person name="Zhang T.-N."/>
            <person name="Li Y.-L."/>
            <person name="Su Y.-N."/>
            <person name="Li L."/>
            <person name="Sui J.-H."/>
            <person name="Chen S."/>
            <person name="He X.-J."/>
        </authorList>
    </citation>
    <scope>FUNCTION</scope>
    <scope>MUTAGENESIS OF TRP-170 AND TYR-172</scope>
    <scope>DISRUPTION PHENOTYPE</scope>
    <scope>INTERACTION WITH CPL2; PHD1; PAIPP2/PHD2; AIPP2/PHD3; PHD4; PHD5 AND PHD6</scope>
    <scope>DOMAIN</scope>
    <scope>H3K27ME3-BINDING</scope>
    <source>
        <strain>cv. Columbia</strain>
    </source>
</reference>
<reference key="8">
    <citation type="journal article" date="2020" name="Nat. Commun.">
        <title>Coupling of H3K27me3 recognition with transcriptional repression through the BAH-PHD-CPL2 complex in Arabidopsis.</title>
        <authorList>
            <person name="Zhang Y.-Z."/>
            <person name="Yuan J."/>
            <person name="Zhang L."/>
            <person name="Chen C."/>
            <person name="Wang Y."/>
            <person name="Zhang G."/>
            <person name="Peng L."/>
            <person name="Xie S.-S."/>
            <person name="Jiang J."/>
            <person name="Zhu J.-K."/>
            <person name="Du J."/>
            <person name="Duan C.-G."/>
        </authorList>
    </citation>
    <scope>X-RAY CRYSTALLOGRAPHY (2.40 ANGSTROMS) OF 112-279 IN COMPLEX WITH A H3K27ME3 PEPTIDE</scope>
    <scope>FUNCTION</scope>
    <scope>DISRUPTION PHENOTYPE</scope>
    <scope>MUTAGENESIS OF TYR-149; TRP-170; TYR-172; HIS-198 AND ASP-200</scope>
    <scope>SUBUNIT</scope>
    <scope>INTERACTION WITH AIPP2 AND PAIPP2</scope>
    <scope>TISSUE SPECIFICITY</scope>
    <scope>DOMAIN</scope>
    <source>
        <strain>cv. Columbia</strain>
    </source>
</reference>
<proteinExistence type="evidence at protein level"/>
<keyword id="KW-0002">3D-structure</keyword>
<keyword id="KW-0539">Nucleus</keyword>
<keyword id="KW-1185">Reference proteome</keyword>
<keyword id="KW-0678">Repressor</keyword>
<keyword id="KW-0804">Transcription</keyword>
<keyword id="KW-0805">Transcription regulation</keyword>
<sequence length="587" mass="66458">MVLSRRFAQVSSDEEDDVPITRSKGRNSASPEESLGKRRKRKTVKLYEDFEEKEADRKKKRKGNKEDEDMAEGDDDQAEEETNPEAEEEEDEEEEEKPDDACPVGDSVNVTGKGKGKRTHFNQFAYDGNTYDLEVPVLLVPEDKSQKPYVAIIKDITQTKDGSMMILGQWFYRPEEAEKRGGGNWQSSDTRELFYSFHRDEVPAESVMHRCVVYFVPAHKQLPKRKNNPGFIVRKVYDTVEKKLWKLTDKDYEDSKQREIDVLVKKTMNVLGDLPDLESEDMLVDQENVLKAKRSFRKVNISPVDVRREEDASLKAETPGSGAGISSEHYAILEKFDSLTGDAHRDKCLGKLLEAVQHICYIPENKQAGDEAKVGSDASHLEQDEKDTKPENGKDEKFLWPDAAVPQVCALENASHASLASDFQKYNQKMRTLVFNLKNTALLARRLLNGELEPATILNMSPTELKEGLTADETTKKEPDDADRMQMTSVRCSRCSQLTVGLRDIIQAGHGDRYQLECVDCGYSWYASRDEVSTLTIVTDKPAQGTEKEDIEKNLTSPRETNKPKDEALKTNDSNADNNPEASKKPE</sequence>
<protein>
    <recommendedName>
        <fullName evidence="11 12 13">ASI1-immunoprecipitated protein 3</fullName>
    </recommendedName>
    <alternativeName>
        <fullName evidence="9 13">Bromo-adjacent homology domain-containing protein 1</fullName>
        <shortName evidence="9 13">BAH domain-containing transcriptional regulator 1</shortName>
    </alternativeName>
    <alternativeName>
        <fullName evidence="10">Protein REPRESSOR OF VERNALIZATION 1</fullName>
        <shortName evidence="10">AtRVR1</shortName>
    </alternativeName>
</protein>
<evidence type="ECO:0000255" key="1">
    <source>
        <dbReference type="PROSITE-ProRule" id="PRU00370"/>
    </source>
</evidence>
<evidence type="ECO:0000255" key="2">
    <source>
        <dbReference type="PROSITE-ProRule" id="PRU00651"/>
    </source>
</evidence>
<evidence type="ECO:0000256" key="3">
    <source>
        <dbReference type="SAM" id="MobiDB-lite"/>
    </source>
</evidence>
<evidence type="ECO:0000269" key="4">
    <source>
    </source>
</evidence>
<evidence type="ECO:0000269" key="5">
    <source>
    </source>
</evidence>
<evidence type="ECO:0000269" key="6">
    <source>
    </source>
</evidence>
<evidence type="ECO:0000269" key="7">
    <source>
    </source>
</evidence>
<evidence type="ECO:0000269" key="8">
    <source>
    </source>
</evidence>
<evidence type="ECO:0000303" key="9">
    <source>
    </source>
</evidence>
<evidence type="ECO:0000303" key="10">
    <source>
    </source>
</evidence>
<evidence type="ECO:0000303" key="11">
    <source>
    </source>
</evidence>
<evidence type="ECO:0000303" key="12">
    <source>
    </source>
</evidence>
<evidence type="ECO:0000303" key="13">
    <source>
    </source>
</evidence>
<evidence type="ECO:0000305" key="14"/>
<evidence type="ECO:0000312" key="15">
    <source>
        <dbReference type="Araport" id="AT4G11560"/>
    </source>
</evidence>
<evidence type="ECO:0000312" key="16">
    <source>
        <dbReference type="EMBL" id="CAB82161.1"/>
    </source>
</evidence>
<evidence type="ECO:0007744" key="17">
    <source>
        <dbReference type="PDB" id="7CCE"/>
    </source>
</evidence>
<evidence type="ECO:0007829" key="18">
    <source>
        <dbReference type="PDB" id="7CCE"/>
    </source>
</evidence>
<name>AIPP3_ARATH</name>
<dbReference type="EMBL" id="AL050399">
    <property type="protein sequence ID" value="CAB82161.1"/>
    <property type="status" value="ALT_SEQ"/>
    <property type="molecule type" value="Genomic_DNA"/>
</dbReference>
<dbReference type="EMBL" id="AL161532">
    <property type="protein sequence ID" value="CAB78199.1"/>
    <property type="status" value="ALT_SEQ"/>
    <property type="molecule type" value="Genomic_DNA"/>
</dbReference>
<dbReference type="EMBL" id="CP002687">
    <property type="protein sequence ID" value="AEE83024.1"/>
    <property type="molecule type" value="Genomic_DNA"/>
</dbReference>
<dbReference type="EMBL" id="AY080679">
    <property type="protein sequence ID" value="AAL86355.1"/>
    <property type="molecule type" value="mRNA"/>
</dbReference>
<dbReference type="EMBL" id="AY133747">
    <property type="protein sequence ID" value="AAM91681.1"/>
    <property type="molecule type" value="mRNA"/>
</dbReference>
<dbReference type="PIR" id="T10576">
    <property type="entry name" value="T10576"/>
</dbReference>
<dbReference type="RefSeq" id="NP_192893.2">
    <property type="nucleotide sequence ID" value="NM_117225.4"/>
</dbReference>
<dbReference type="PDB" id="7CCE">
    <property type="method" value="X-ray"/>
    <property type="resolution" value="2.40 A"/>
    <property type="chains" value="A=112-279"/>
</dbReference>
<dbReference type="PDBsum" id="7CCE"/>
<dbReference type="SMR" id="Q8RXT5"/>
<dbReference type="FunCoup" id="Q8RXT5">
    <property type="interactions" value="1712"/>
</dbReference>
<dbReference type="STRING" id="3702.Q8RXT5"/>
<dbReference type="iPTMnet" id="Q8RXT5"/>
<dbReference type="PaxDb" id="3702-AT4G11560.1"/>
<dbReference type="ProteomicsDB" id="179311"/>
<dbReference type="EnsemblPlants" id="AT4G11560.1">
    <property type="protein sequence ID" value="AT4G11560.1"/>
    <property type="gene ID" value="AT4G11560"/>
</dbReference>
<dbReference type="GeneID" id="826760"/>
<dbReference type="Gramene" id="AT4G11560.1">
    <property type="protein sequence ID" value="AT4G11560.1"/>
    <property type="gene ID" value="AT4G11560"/>
</dbReference>
<dbReference type="Araport" id="AT4G11560"/>
<dbReference type="TAIR" id="AT4G11560">
    <property type="gene designation" value="AIPP3"/>
</dbReference>
<dbReference type="eggNOG" id="KOG1886">
    <property type="taxonomic scope" value="Eukaryota"/>
</dbReference>
<dbReference type="HOGENOM" id="CLU_026265_2_0_1"/>
<dbReference type="OMA" id="TIDGPNS"/>
<dbReference type="PRO" id="PR:Q8RXT5"/>
<dbReference type="Proteomes" id="UP000006548">
    <property type="component" value="Chromosome 4"/>
</dbReference>
<dbReference type="ExpressionAtlas" id="Q8RXT5">
    <property type="expression patterns" value="baseline and differential"/>
</dbReference>
<dbReference type="GO" id="GO:0005634">
    <property type="term" value="C:nucleus"/>
    <property type="evidence" value="ECO:0007669"/>
    <property type="project" value="UniProtKB-SubCell"/>
</dbReference>
<dbReference type="GO" id="GO:0003682">
    <property type="term" value="F:chromatin binding"/>
    <property type="evidence" value="ECO:0007669"/>
    <property type="project" value="InterPro"/>
</dbReference>
<dbReference type="GO" id="GO:0001217">
    <property type="term" value="F:DNA-binding transcription repressor activity"/>
    <property type="evidence" value="ECO:0000314"/>
    <property type="project" value="TAIR"/>
</dbReference>
<dbReference type="GO" id="GO:0061628">
    <property type="term" value="F:histone H3K27me3 reader activity"/>
    <property type="evidence" value="ECO:0000314"/>
    <property type="project" value="UniProtKB"/>
</dbReference>
<dbReference type="GO" id="GO:0140566">
    <property type="term" value="F:histone reader activity"/>
    <property type="evidence" value="ECO:0000314"/>
    <property type="project" value="UniProtKB"/>
</dbReference>
<dbReference type="GO" id="GO:0006351">
    <property type="term" value="P:DNA-templated transcription"/>
    <property type="evidence" value="ECO:0007669"/>
    <property type="project" value="InterPro"/>
</dbReference>
<dbReference type="GO" id="GO:0045814">
    <property type="term" value="P:negative regulation of gene expression, epigenetic"/>
    <property type="evidence" value="ECO:0000314"/>
    <property type="project" value="UniProtKB"/>
</dbReference>
<dbReference type="GO" id="GO:0034244">
    <property type="term" value="P:negative regulation of transcription elongation by RNA polymerase II"/>
    <property type="evidence" value="ECO:0000315"/>
    <property type="project" value="UniProtKB"/>
</dbReference>
<dbReference type="GO" id="GO:2000028">
    <property type="term" value="P:regulation of photoperiodism, flowering"/>
    <property type="evidence" value="ECO:0000315"/>
    <property type="project" value="UniProtKB"/>
</dbReference>
<dbReference type="CDD" id="cd04713">
    <property type="entry name" value="BAH_plant_3"/>
    <property type="match status" value="1"/>
</dbReference>
<dbReference type="Gene3D" id="2.30.30.490">
    <property type="match status" value="1"/>
</dbReference>
<dbReference type="Gene3D" id="1.10.472.30">
    <property type="entry name" value="Transcription elongation factor S-II, central domain"/>
    <property type="match status" value="1"/>
</dbReference>
<dbReference type="InterPro" id="IPR001025">
    <property type="entry name" value="BAH_dom"/>
</dbReference>
<dbReference type="InterPro" id="IPR043151">
    <property type="entry name" value="BAH_sf"/>
</dbReference>
<dbReference type="InterPro" id="IPR003618">
    <property type="entry name" value="TFIIS_cen_dom"/>
</dbReference>
<dbReference type="InterPro" id="IPR036575">
    <property type="entry name" value="TFIIS_cen_dom_sf"/>
</dbReference>
<dbReference type="PANTHER" id="PTHR46871">
    <property type="entry name" value="BROMO-ADJACENT HOMOLOGY (BAH) DOMAIN-CONTAINING PROTEIN"/>
    <property type="match status" value="1"/>
</dbReference>
<dbReference type="PANTHER" id="PTHR46871:SF1">
    <property type="entry name" value="BROMO-ADJACENT HOMOLOGY (BAH) DOMAIN-CONTAINING PROTEIN"/>
    <property type="match status" value="1"/>
</dbReference>
<dbReference type="Pfam" id="PF01426">
    <property type="entry name" value="BAH"/>
    <property type="match status" value="1"/>
</dbReference>
<dbReference type="Pfam" id="PF07500">
    <property type="entry name" value="TFIIS_M"/>
    <property type="match status" value="1"/>
</dbReference>
<dbReference type="SMART" id="SM00439">
    <property type="entry name" value="BAH"/>
    <property type="match status" value="1"/>
</dbReference>
<dbReference type="SMART" id="SM00510">
    <property type="entry name" value="TFS2M"/>
    <property type="match status" value="1"/>
</dbReference>
<dbReference type="SUPFAM" id="SSF46942">
    <property type="entry name" value="Elongation factor TFIIS domain 2"/>
    <property type="match status" value="1"/>
</dbReference>
<dbReference type="PROSITE" id="PS51038">
    <property type="entry name" value="BAH"/>
    <property type="match status" value="1"/>
</dbReference>
<dbReference type="PROSITE" id="PS51321">
    <property type="entry name" value="TFIIS_CENTRAL"/>
    <property type="match status" value="1"/>
</dbReference>
<comment type="function">
    <text evidence="5 6 7 8">Transcriptional repressor (PubMed:33433058). Together with PHD finger-containing proteins (e.g. PHD1, PAIPP2/PHD2, AIPP2/PHD3, PHD4, PHD5 and PHD6), cooperates to form a BAH-PHD bivalent histone reader complex able to read histone H3 lysine 27 trimethylation (H3K27me3) and low-methylated H3K4 histone marks in order to regulate transcription, especially to prevent early flowering; H3K27me3 reader of this complex (PubMed:33277495, PubMed:33433058). CPL2 is subsequently recruited to form a BAH-PHD-CPL2 complex (BPC) in order to silence several H3K27me3 and low-methylated H3K4 enriched loci, including AGO5, via the phosphorylation state-dependent inhibition of Pol II release from the transcriptional start site (e.g. Ser5P-Pol II dephosphorylation) (PubMed:33277495, PubMed:33433058). The BPC complex represses flowering by inhibiting the expression of several genes, including AGL6, FT, FUL and SOC1 (PubMed:33277495, PubMed:33433058). Prevents the accumulation of intronic heterochromatin-containing genes (e.g. IBM1, At3g05410 and RPP7) (PubMed:28808009). Seems to not be involved in vernalization establishment, by contrast to orthologs in grass plants (PubMed:28584114).</text>
</comment>
<comment type="subunit">
    <text evidence="4 6 7 8">Interacts with MOM1 (PubMed:27113777). Component of the ASI1-AIPP1-EDM2 (AAE) RNA regulatory complex composed of at least AIPP1/EDM3, ASI1 and EDM2 and may contain CPL2, AIPP2 and AIPP3/BDT1 (PubMed:28808009). Part of the BAH-PHD bivalent histone reader complex that contains AIPP2, PAIPP2 and AIPP3/BDT1; the BAH-PHD module associates with CPL2 to form the BAH-PHD-CPL2 complex (BPC) for transcriptional repression (PubMed:33277495). Binds directly to CPL2, PHD1, PAIPP2/PHD2, AIPP2/PHD3, PHD4, PHD5 and PHD6 (PubMed:28808009, PubMed:33277495, PubMed:33433058).</text>
</comment>
<comment type="subcellular location">
    <subcellularLocation>
        <location evidence="2">Nucleus</location>
    </subcellularLocation>
</comment>
<comment type="tissue specificity">
    <text evidence="7">Expressed ubiquitously.</text>
</comment>
<comment type="domain">
    <text evidence="7 8">The BAH domain (129-248) recognizes specifically histone H3 lysine 27 trimethylation (H3K27me3) hallmarks, binding affinity being proportional to H3K27 methylation level.</text>
</comment>
<comment type="disruption phenotype">
    <text evidence="5 6 7 8">The mutant aipp3-1 exhibits multiple developmental defects, such as a dwarfed size, early flowering, small leaves and poor fertility (PubMed:33277495). Accelerated flowering time under long-day conditions (PubMed:33433058). Abnormally up-regulated expression of many genes localized at H3K27me3 and low-methylated H3K4 enriched loci associated with a higher accumulation of activated RNA polymerase II phosphorylated at 'Ser-5' (Ser5P-Pol II) (PubMed:33277495, PubMed:33433058). No impact on vernalization (PubMed:28584114). Enhanced accumulation of intronic heterochromatin (HC)-containing genes functional full-length transcripts (e.g. IBM1, At3g05410 and RPP7) (PubMed:28808009). Increased expression of At4g16870, a transposable element (TE) of Copia-like retrotransposon origin, associated with methylated status (PubMed:28808009).</text>
</comment>
<comment type="sequence caution" evidence="14">
    <conflict type="erroneous gene model prediction">
        <sequence resource="EMBL-CDS" id="CAB78199"/>
    </conflict>
</comment>
<comment type="sequence caution" evidence="14">
    <conflict type="erroneous gene model prediction">
        <sequence resource="EMBL-CDS" id="CAB82161"/>
    </conflict>
</comment>
<feature type="chain" id="PRO_0000458555" description="ASI1-immunoprecipitated protein 3">
    <location>
        <begin position="1"/>
        <end position="587"/>
    </location>
</feature>
<feature type="domain" description="BAH" evidence="1">
    <location>
        <begin position="129"/>
        <end position="248"/>
    </location>
</feature>
<feature type="domain" description="TFIIS central" evidence="2">
    <location>
        <begin position="344"/>
        <end position="493"/>
    </location>
</feature>
<feature type="region of interest" description="Disordered" evidence="3">
    <location>
        <begin position="1"/>
        <end position="118"/>
    </location>
</feature>
<feature type="region of interest" description="Disordered" evidence="3">
    <location>
        <begin position="371"/>
        <end position="396"/>
    </location>
</feature>
<feature type="region of interest" description="Disordered" evidence="3">
    <location>
        <begin position="539"/>
        <end position="587"/>
    </location>
</feature>
<feature type="compositionally biased region" description="Acidic residues" evidence="3">
    <location>
        <begin position="66"/>
        <end position="98"/>
    </location>
</feature>
<feature type="compositionally biased region" description="Basic and acidic residues" evidence="3">
    <location>
        <begin position="560"/>
        <end position="570"/>
    </location>
</feature>
<feature type="compositionally biased region" description="Polar residues" evidence="3">
    <location>
        <begin position="571"/>
        <end position="581"/>
    </location>
</feature>
<feature type="site" description="Histone H3 lysine 27 trimethylation (H3K27me3) binding" evidence="7 17">
    <location>
        <position position="140"/>
    </location>
</feature>
<feature type="site" description="Histone H3 lysine 27 trimethylation (H3K27me3) binding" evidence="7 17">
    <location>
        <position position="142"/>
    </location>
</feature>
<feature type="site" description="Histone H3 lysine 27 trimethylation (H3K27me3) binding" evidence="7 17">
    <location>
        <position position="149"/>
    </location>
</feature>
<feature type="site" description="Histone H3 lysine 27 trimethylation (H3K27me3) binding" evidence="7 8 17">
    <location>
        <position position="170"/>
    </location>
</feature>
<feature type="site" description="Histone H3 lysine 27 trimethylation (H3K27me3) binding" evidence="7 8 17">
    <location>
        <position position="172"/>
    </location>
</feature>
<feature type="site" description="Histone H3 lysine 27 trimethylation (H3K27me3) binding" evidence="7 17">
    <location>
        <position position="198"/>
    </location>
</feature>
<feature type="site" description="Histone H3 lysine 27 trimethylation (H3K27me3) binding" evidence="7 17">
    <location>
        <position position="200"/>
    </location>
</feature>
<feature type="site" description="Histone H3 lysine 27 trimethylation (H3K27me3) binding" evidence="7 17">
    <location>
        <position position="240"/>
    </location>
</feature>
<feature type="mutagenesis site" description="Reduced binding to trimethylated histone H3 lysine 27 (H3K27me3). Not able to rescue disruption phenotype; when associated with A-170 and A-172." evidence="7">
    <original>Y</original>
    <variation>A</variation>
    <location>
        <position position="149"/>
    </location>
</feature>
<feature type="mutagenesis site" description="Lost binding to methylated histone H3 lysine 27 (H3K27me3, H3K27me2 and H3K27me1). Not able to rescue disruption phenotype. Not able to rescue disruption phenotype; when associated with A-149 and A-172." evidence="7 8">
    <original>W</original>
    <variation>A</variation>
    <location>
        <position position="170"/>
    </location>
</feature>
<feature type="mutagenesis site" description="Lost binding to methylated histone H3 lysine 27 (H3K27me3, H3K27me2 and H3K27me1) and accelerated flowering time under long-day conditions; when associated with A-172." evidence="8">
    <original>W</original>
    <variation>L</variation>
    <location>
        <position position="170"/>
    </location>
</feature>
<feature type="mutagenesis site" description="Lost binding to trimethylated histone H3 lysine 27 (H3K27me3). Lost binding to methylated histone H3 lysine 27 (H3K27me3, H3K27me2 and H3K27me1) and accelerated flowering time under long-day conditions; when associated with L-170. Not able to rescue disruption phenotype; when associated with A-149 and A-172." evidence="7 8">
    <original>Y</original>
    <variation>A</variation>
    <location>
        <position position="172"/>
    </location>
</feature>
<feature type="mutagenesis site" description="Reduced binding to trimethylated histone H3 lysine 27 (H3K27me3)." evidence="7">
    <original>H</original>
    <variation>A</variation>
    <location>
        <position position="198"/>
    </location>
</feature>
<feature type="mutagenesis site" description="Lost binding to trimethylated histone H3 lysine 27 (H3K27me3)." evidence="7">
    <original>D</original>
    <variation>A</variation>
    <location>
        <position position="200"/>
    </location>
</feature>
<feature type="strand" evidence="18">
    <location>
        <begin position="120"/>
        <end position="122"/>
    </location>
</feature>
<feature type="strand" evidence="18">
    <location>
        <begin position="124"/>
        <end position="126"/>
    </location>
</feature>
<feature type="strand" evidence="18">
    <location>
        <begin position="129"/>
        <end position="131"/>
    </location>
</feature>
<feature type="strand" evidence="18">
    <location>
        <begin position="136"/>
        <end position="139"/>
    </location>
</feature>
<feature type="strand" evidence="18">
    <location>
        <begin position="141"/>
        <end position="143"/>
    </location>
</feature>
<feature type="strand" evidence="18">
    <location>
        <begin position="149"/>
        <end position="158"/>
    </location>
</feature>
<feature type="strand" evidence="18">
    <location>
        <begin position="164"/>
        <end position="172"/>
    </location>
</feature>
<feature type="turn" evidence="18">
    <location>
        <begin position="174"/>
        <end position="176"/>
    </location>
</feature>
<feature type="strand" evidence="18">
    <location>
        <begin position="192"/>
        <end position="203"/>
    </location>
</feature>
<feature type="helix" evidence="18">
    <location>
        <begin position="204"/>
        <end position="206"/>
    </location>
</feature>
<feature type="strand" evidence="18">
    <location>
        <begin position="207"/>
        <end position="210"/>
    </location>
</feature>
<feature type="strand" evidence="18">
    <location>
        <begin position="213"/>
        <end position="215"/>
    </location>
</feature>
<feature type="strand" evidence="18">
    <location>
        <begin position="218"/>
        <end position="220"/>
    </location>
</feature>
<feature type="turn" evidence="18">
    <location>
        <begin position="225"/>
        <end position="227"/>
    </location>
</feature>
<feature type="strand" evidence="18">
    <location>
        <begin position="230"/>
        <end position="238"/>
    </location>
</feature>
<feature type="turn" evidence="18">
    <location>
        <begin position="239"/>
        <end position="242"/>
    </location>
</feature>
<feature type="strand" evidence="18">
    <location>
        <begin position="243"/>
        <end position="245"/>
    </location>
</feature>
<feature type="helix" evidence="18">
    <location>
        <begin position="254"/>
        <end position="270"/>
    </location>
</feature>
<accession>Q8RXT5</accession>
<accession>Q9LDW8</accession>